<comment type="function">
    <text evidence="1">Catalyzes the transfer of a dimethylallyl group onto the adenine at position 37 in tRNAs that read codons beginning with uridine, leading to the formation of N6-(dimethylallyl)adenosine (i(6)A).</text>
</comment>
<comment type="catalytic activity">
    <reaction evidence="1">
        <text>adenosine(37) in tRNA + dimethylallyl diphosphate = N(6)-dimethylallyladenosine(37) in tRNA + diphosphate</text>
        <dbReference type="Rhea" id="RHEA:26482"/>
        <dbReference type="Rhea" id="RHEA-COMP:10162"/>
        <dbReference type="Rhea" id="RHEA-COMP:10375"/>
        <dbReference type="ChEBI" id="CHEBI:33019"/>
        <dbReference type="ChEBI" id="CHEBI:57623"/>
        <dbReference type="ChEBI" id="CHEBI:74411"/>
        <dbReference type="ChEBI" id="CHEBI:74415"/>
        <dbReference type="EC" id="2.5.1.75"/>
    </reaction>
</comment>
<comment type="cofactor">
    <cofactor evidence="1">
        <name>Mg(2+)</name>
        <dbReference type="ChEBI" id="CHEBI:18420"/>
    </cofactor>
</comment>
<comment type="subunit">
    <text evidence="1">Monomer.</text>
</comment>
<comment type="similarity">
    <text evidence="1">Belongs to the IPP transferase family.</text>
</comment>
<gene>
    <name evidence="1" type="primary">miaA</name>
    <name type="ordered locus">AHA_0923</name>
</gene>
<proteinExistence type="inferred from homology"/>
<sequence>MPTAIFLMGPTASGKTDLAIELCQALPCDIISVDSALIYRGMDIGTAKPSAAELALAPHRLIDILDPAVSYSAADFCKDALREMKEIAERGRIPLLVGGTMLYFKALLEGLSPLPSADPVIRAGIEEEAARLGWQALHDELVRIDPVAGARIHPNDPQRLSRALEVYRISGKTLTELTQVQGEGLPYRVLQFAIAPSDRAVLHQRIELRFDKMLQGGFEQEVRALYQRGDLTPDLPSIRCVGYRQMWDYLAGEVEYDEMRYRGIVATRQLAKRQMTWLRGWSDVTWLESGESGNLARVVARAGVA</sequence>
<reference key="1">
    <citation type="journal article" date="2006" name="J. Bacteriol.">
        <title>Genome sequence of Aeromonas hydrophila ATCC 7966T: jack of all trades.</title>
        <authorList>
            <person name="Seshadri R."/>
            <person name="Joseph S.W."/>
            <person name="Chopra A.K."/>
            <person name="Sha J."/>
            <person name="Shaw J."/>
            <person name="Graf J."/>
            <person name="Haft D.H."/>
            <person name="Wu M."/>
            <person name="Ren Q."/>
            <person name="Rosovitz M.J."/>
            <person name="Madupu R."/>
            <person name="Tallon L."/>
            <person name="Kim M."/>
            <person name="Jin S."/>
            <person name="Vuong H."/>
            <person name="Stine O.C."/>
            <person name="Ali A."/>
            <person name="Horneman A.J."/>
            <person name="Heidelberg J.F."/>
        </authorList>
    </citation>
    <scope>NUCLEOTIDE SEQUENCE [LARGE SCALE GENOMIC DNA]</scope>
    <source>
        <strain>ATCC 7966 / DSM 30187 / BCRC 13018 / CCUG 14551 / JCM 1027 / KCTC 2358 / NCIMB 9240 / NCTC 8049</strain>
    </source>
</reference>
<accession>A0KGS0</accession>
<organism>
    <name type="scientific">Aeromonas hydrophila subsp. hydrophila (strain ATCC 7966 / DSM 30187 / BCRC 13018 / CCUG 14551 / JCM 1027 / KCTC 2358 / NCIMB 9240 / NCTC 8049)</name>
    <dbReference type="NCBI Taxonomy" id="380703"/>
    <lineage>
        <taxon>Bacteria</taxon>
        <taxon>Pseudomonadati</taxon>
        <taxon>Pseudomonadota</taxon>
        <taxon>Gammaproteobacteria</taxon>
        <taxon>Aeromonadales</taxon>
        <taxon>Aeromonadaceae</taxon>
        <taxon>Aeromonas</taxon>
    </lineage>
</organism>
<dbReference type="EC" id="2.5.1.75" evidence="1"/>
<dbReference type="EMBL" id="CP000462">
    <property type="protein sequence ID" value="ABK36836.1"/>
    <property type="molecule type" value="Genomic_DNA"/>
</dbReference>
<dbReference type="RefSeq" id="WP_011704863.1">
    <property type="nucleotide sequence ID" value="NC_008570.1"/>
</dbReference>
<dbReference type="RefSeq" id="YP_855466.1">
    <property type="nucleotide sequence ID" value="NC_008570.1"/>
</dbReference>
<dbReference type="SMR" id="A0KGS0"/>
<dbReference type="STRING" id="380703.AHA_0923"/>
<dbReference type="EnsemblBacteria" id="ABK36836">
    <property type="protein sequence ID" value="ABK36836"/>
    <property type="gene ID" value="AHA_0923"/>
</dbReference>
<dbReference type="GeneID" id="4488409"/>
<dbReference type="KEGG" id="aha:AHA_0923"/>
<dbReference type="PATRIC" id="fig|380703.7.peg.923"/>
<dbReference type="eggNOG" id="COG0324">
    <property type="taxonomic scope" value="Bacteria"/>
</dbReference>
<dbReference type="HOGENOM" id="CLU_032616_0_0_6"/>
<dbReference type="OrthoDB" id="9776390at2"/>
<dbReference type="Proteomes" id="UP000000756">
    <property type="component" value="Chromosome"/>
</dbReference>
<dbReference type="GO" id="GO:0005524">
    <property type="term" value="F:ATP binding"/>
    <property type="evidence" value="ECO:0007669"/>
    <property type="project" value="UniProtKB-UniRule"/>
</dbReference>
<dbReference type="GO" id="GO:0052381">
    <property type="term" value="F:tRNA dimethylallyltransferase activity"/>
    <property type="evidence" value="ECO:0007669"/>
    <property type="project" value="UniProtKB-UniRule"/>
</dbReference>
<dbReference type="GO" id="GO:0006400">
    <property type="term" value="P:tRNA modification"/>
    <property type="evidence" value="ECO:0007669"/>
    <property type="project" value="TreeGrafter"/>
</dbReference>
<dbReference type="FunFam" id="1.10.20.140:FF:000001">
    <property type="entry name" value="tRNA dimethylallyltransferase"/>
    <property type="match status" value="1"/>
</dbReference>
<dbReference type="Gene3D" id="1.10.20.140">
    <property type="match status" value="1"/>
</dbReference>
<dbReference type="Gene3D" id="3.40.50.300">
    <property type="entry name" value="P-loop containing nucleotide triphosphate hydrolases"/>
    <property type="match status" value="1"/>
</dbReference>
<dbReference type="HAMAP" id="MF_00185">
    <property type="entry name" value="IPP_trans"/>
    <property type="match status" value="1"/>
</dbReference>
<dbReference type="InterPro" id="IPR039657">
    <property type="entry name" value="Dimethylallyltransferase"/>
</dbReference>
<dbReference type="InterPro" id="IPR018022">
    <property type="entry name" value="IPT"/>
</dbReference>
<dbReference type="InterPro" id="IPR027417">
    <property type="entry name" value="P-loop_NTPase"/>
</dbReference>
<dbReference type="NCBIfam" id="TIGR00174">
    <property type="entry name" value="miaA"/>
    <property type="match status" value="1"/>
</dbReference>
<dbReference type="PANTHER" id="PTHR11088">
    <property type="entry name" value="TRNA DIMETHYLALLYLTRANSFERASE"/>
    <property type="match status" value="1"/>
</dbReference>
<dbReference type="PANTHER" id="PTHR11088:SF60">
    <property type="entry name" value="TRNA DIMETHYLALLYLTRANSFERASE"/>
    <property type="match status" value="1"/>
</dbReference>
<dbReference type="Pfam" id="PF01715">
    <property type="entry name" value="IPPT"/>
    <property type="match status" value="1"/>
</dbReference>
<dbReference type="SUPFAM" id="SSF52540">
    <property type="entry name" value="P-loop containing nucleoside triphosphate hydrolases"/>
    <property type="match status" value="2"/>
</dbReference>
<protein>
    <recommendedName>
        <fullName evidence="1">tRNA dimethylallyltransferase</fullName>
        <ecNumber evidence="1">2.5.1.75</ecNumber>
    </recommendedName>
    <alternativeName>
        <fullName evidence="1">Dimethylallyl diphosphate:tRNA dimethylallyltransferase</fullName>
        <shortName evidence="1">DMAPP:tRNA dimethylallyltransferase</shortName>
        <shortName evidence="1">DMATase</shortName>
    </alternativeName>
    <alternativeName>
        <fullName evidence="1">Isopentenyl-diphosphate:tRNA isopentenyltransferase</fullName>
        <shortName evidence="1">IPP transferase</shortName>
        <shortName evidence="1">IPPT</shortName>
        <shortName evidence="1">IPTase</shortName>
    </alternativeName>
</protein>
<name>MIAA_AERHH</name>
<keyword id="KW-0067">ATP-binding</keyword>
<keyword id="KW-0460">Magnesium</keyword>
<keyword id="KW-0547">Nucleotide-binding</keyword>
<keyword id="KW-1185">Reference proteome</keyword>
<keyword id="KW-0808">Transferase</keyword>
<keyword id="KW-0819">tRNA processing</keyword>
<feature type="chain" id="PRO_0000377052" description="tRNA dimethylallyltransferase">
    <location>
        <begin position="1"/>
        <end position="305"/>
    </location>
</feature>
<feature type="region of interest" description="Interaction with substrate tRNA" evidence="1">
    <location>
        <begin position="34"/>
        <end position="37"/>
    </location>
</feature>
<feature type="region of interest" description="Interaction with substrate tRNA" evidence="1">
    <location>
        <begin position="158"/>
        <end position="162"/>
    </location>
</feature>
<feature type="region of interest" description="Interaction with substrate tRNA" evidence="1">
    <location>
        <begin position="239"/>
        <end position="244"/>
    </location>
</feature>
<feature type="binding site" evidence="1">
    <location>
        <begin position="9"/>
        <end position="16"/>
    </location>
    <ligand>
        <name>ATP</name>
        <dbReference type="ChEBI" id="CHEBI:30616"/>
    </ligand>
</feature>
<feature type="binding site" evidence="1">
    <location>
        <begin position="11"/>
        <end position="16"/>
    </location>
    <ligand>
        <name>substrate</name>
    </ligand>
</feature>
<feature type="site" description="Interaction with substrate tRNA" evidence="1">
    <location>
        <position position="100"/>
    </location>
</feature>
<feature type="site" description="Interaction with substrate tRNA" evidence="1">
    <location>
        <position position="122"/>
    </location>
</feature>
<evidence type="ECO:0000255" key="1">
    <source>
        <dbReference type="HAMAP-Rule" id="MF_00185"/>
    </source>
</evidence>